<sequence length="160" mass="17903">MKKAHMFLATAAALGVAMFPTQINEAARGLRNNNPLNIKEGSDGGAQWEGEHELDLDPTFEEFKTPVHGIRAGARILRTYAVKYGLESIEGIIARWAPEEENDTENYINFVANKTGIPRNQKLNDETYPAVISAMIDMENGSNPYTYDEIKKGFEWGFYG</sequence>
<evidence type="ECO:0000255" key="1"/>
<evidence type="ECO:0000305" key="2"/>
<evidence type="ECO:0000305" key="3">
    <source>
    </source>
</evidence>
<keyword id="KW-1231">Capsid inner membrane protein</keyword>
<keyword id="KW-0903">Direct protein sequencing</keyword>
<keyword id="KW-0472">Membrane</keyword>
<keyword id="KW-1185">Reference proteome</keyword>
<keyword id="KW-0812">Transmembrane</keyword>
<keyword id="KW-1133">Transmembrane helix</keyword>
<keyword id="KW-0946">Virion</keyword>
<gene>
    <name type="primary">V</name>
</gene>
<name>P5_BPPM2</name>
<dbReference type="EMBL" id="AF155037">
    <property type="protein sequence ID" value="AAD43555.1"/>
    <property type="molecule type" value="Genomic_DNA"/>
</dbReference>
<dbReference type="RefSeq" id="NP_049909.1">
    <property type="nucleotide sequence ID" value="NC_000867.1"/>
</dbReference>
<dbReference type="SMR" id="Q9XJR2"/>
<dbReference type="GeneID" id="1262027"/>
<dbReference type="KEGG" id="vg:1262027"/>
<dbReference type="Proteomes" id="UP000002136">
    <property type="component" value="Genome"/>
</dbReference>
<dbReference type="GO" id="GO:0016020">
    <property type="term" value="C:membrane"/>
    <property type="evidence" value="ECO:0007669"/>
    <property type="project" value="UniProtKB-KW"/>
</dbReference>
<dbReference type="GO" id="GO:0039641">
    <property type="term" value="C:viral inner membrane"/>
    <property type="evidence" value="ECO:0007669"/>
    <property type="project" value="UniProtKB-KW"/>
</dbReference>
<dbReference type="GO" id="GO:0055036">
    <property type="term" value="C:virion membrane"/>
    <property type="evidence" value="ECO:0000314"/>
    <property type="project" value="CACAO"/>
</dbReference>
<organismHost>
    <name type="scientific">Pseudoalteromonas espejiana</name>
    <dbReference type="NCBI Taxonomy" id="28107"/>
</organismHost>
<proteinExistence type="evidence at protein level"/>
<feature type="chain" id="PRO_0000339902" description="Protein P5">
    <location>
        <begin position="1"/>
        <end position="160"/>
    </location>
</feature>
<feature type="transmembrane region" description="Helical" evidence="1">
    <location>
        <begin position="7"/>
        <end position="23"/>
    </location>
</feature>
<accession>Q9XJR2</accession>
<reference key="1">
    <citation type="journal article" date="1999" name="Virology">
        <title>The complete genome sequence of PM2, the first lipid-containing bacterial virus to be isolated.</title>
        <authorList>
            <person name="Maennistoe R.H."/>
            <person name="Kivelae H.M."/>
            <person name="Paulin L."/>
            <person name="Bamford D.H."/>
            <person name="Bamford J.K."/>
        </authorList>
    </citation>
    <scope>NUCLEOTIDE SEQUENCE [GENOMIC DNA]</scope>
</reference>
<reference key="2">
    <citation type="journal article" date="1999" name="Virology">
        <title>Purification and protein composition of PM2, the first lipid-containing bacterial virus to be isolated.</title>
        <authorList>
            <person name="Kivelae H.M."/>
            <person name="Maennistoe R.H."/>
            <person name="Kalkkinen N."/>
            <person name="Bamford D.H."/>
        </authorList>
    </citation>
    <scope>PROTEIN SEQUENCE OF 1-10</scope>
</reference>
<reference key="3">
    <citation type="journal article" date="2002" name="J. Virol.">
        <title>Bacteriophage PM2 has a protein capsid surrounding a spherical proteinaceous lipid core.</title>
        <authorList>
            <person name="Kivelae H.M."/>
            <person name="Kalkkinen N."/>
            <person name="Bamford D.H."/>
        </authorList>
    </citation>
    <scope>SUBCELLULAR LOCATION</scope>
</reference>
<comment type="subcellular location">
    <subcellularLocation>
        <location evidence="3">Virion membrane</location>
        <topology evidence="3">Single-pass membrane protein</topology>
    </subcellularLocation>
    <text evidence="2">Part of the capsid inner membrane.</text>
</comment>
<protein>
    <recommendedName>
        <fullName>Protein P5</fullName>
    </recommendedName>
    <alternativeName>
        <fullName>Protein V</fullName>
    </alternativeName>
</protein>
<organism>
    <name type="scientific">Pseudoalteromonas phage PM2</name>
    <name type="common">Bacteriophage PM2</name>
    <dbReference type="NCBI Taxonomy" id="2905728"/>
    <lineage>
        <taxon>Viruses</taxon>
        <taxon>Varidnaviria</taxon>
        <taxon>Bamfordvirae</taxon>
        <taxon>Preplasmiviricota</taxon>
        <taxon>Tectiliviricetes</taxon>
        <taxon>Vinavirales</taxon>
        <taxon>Corticoviridae</taxon>
        <taxon>Corticovirus</taxon>
        <taxon>Corticovirus PM2</taxon>
    </lineage>
</organism>